<evidence type="ECO:0000250" key="1">
    <source>
        <dbReference type="UniProtKB" id="P07273"/>
    </source>
</evidence>
<evidence type="ECO:0000250" key="2">
    <source>
        <dbReference type="UniProtKB" id="P27948"/>
    </source>
</evidence>
<evidence type="ECO:0000255" key="3">
    <source>
        <dbReference type="PROSITE-ProRule" id="PRU00472"/>
    </source>
</evidence>
<evidence type="ECO:0000255" key="4">
    <source>
        <dbReference type="PROSITE-ProRule" id="PRU00651"/>
    </source>
</evidence>
<evidence type="ECO:0000305" key="5"/>
<dbReference type="EMBL" id="AY261366">
    <property type="status" value="NOT_ANNOTATED_CDS"/>
    <property type="molecule type" value="Genomic_DNA"/>
</dbReference>
<dbReference type="SMR" id="P0C8F8"/>
<dbReference type="Proteomes" id="UP000000858">
    <property type="component" value="Segment"/>
</dbReference>
<dbReference type="GO" id="GO:0003676">
    <property type="term" value="F:nucleic acid binding"/>
    <property type="evidence" value="ECO:0007669"/>
    <property type="project" value="InterPro"/>
</dbReference>
<dbReference type="GO" id="GO:0008270">
    <property type="term" value="F:zinc ion binding"/>
    <property type="evidence" value="ECO:0007669"/>
    <property type="project" value="UniProtKB-KW"/>
</dbReference>
<dbReference type="GO" id="GO:0006351">
    <property type="term" value="P:DNA-templated transcription"/>
    <property type="evidence" value="ECO:0007669"/>
    <property type="project" value="InterPro"/>
</dbReference>
<dbReference type="Gene3D" id="2.20.25.10">
    <property type="match status" value="1"/>
</dbReference>
<dbReference type="InterPro" id="IPR035100">
    <property type="entry name" value="TF_IIS-typ"/>
</dbReference>
<dbReference type="InterPro" id="IPR003618">
    <property type="entry name" value="TFIIS_cen_dom"/>
</dbReference>
<dbReference type="InterPro" id="IPR001222">
    <property type="entry name" value="Znf_TFIIS"/>
</dbReference>
<dbReference type="Pfam" id="PF01096">
    <property type="entry name" value="Zn_ribbon_TFIIS"/>
    <property type="match status" value="1"/>
</dbReference>
<dbReference type="PIRSF" id="PIRSF006704">
    <property type="entry name" value="TF_IIS"/>
    <property type="match status" value="1"/>
</dbReference>
<dbReference type="SMART" id="SM00510">
    <property type="entry name" value="TFS2M"/>
    <property type="match status" value="1"/>
</dbReference>
<dbReference type="SMART" id="SM00440">
    <property type="entry name" value="ZnF_C2C2"/>
    <property type="match status" value="1"/>
</dbReference>
<dbReference type="SUPFAM" id="SSF57783">
    <property type="entry name" value="Zinc beta-ribbon"/>
    <property type="match status" value="1"/>
</dbReference>
<dbReference type="PROSITE" id="PS51321">
    <property type="entry name" value="TFIIS_CENTRAL"/>
    <property type="match status" value="1"/>
</dbReference>
<dbReference type="PROSITE" id="PS00466">
    <property type="entry name" value="ZF_TFIIS_1"/>
    <property type="match status" value="1"/>
</dbReference>
<dbReference type="PROSITE" id="PS51133">
    <property type="entry name" value="ZF_TFIIS_2"/>
    <property type="match status" value="1"/>
</dbReference>
<proteinExistence type="inferred from homology"/>
<comment type="function">
    <text evidence="1">Putative initiation factor. Necessary for efficient transcription elongation past template-encoded arresting sites.</text>
</comment>
<comment type="similarity">
    <text evidence="5">Belongs to the TFS-II family.</text>
</comment>
<protein>
    <recommendedName>
        <fullName evidence="2">Transcription factor TFIIS homolog</fullName>
    </recommendedName>
</protein>
<keyword id="KW-0426">Late protein</keyword>
<keyword id="KW-0479">Metal-binding</keyword>
<keyword id="KW-0804">Transcription</keyword>
<keyword id="KW-0805">Transcription regulation</keyword>
<keyword id="KW-0862">Zinc</keyword>
<keyword id="KW-0863">Zinc-finger</keyword>
<reference key="1">
    <citation type="submission" date="2003-03" db="EMBL/GenBank/DDBJ databases">
        <title>African swine fever virus genomes.</title>
        <authorList>
            <person name="Kutish G.F."/>
            <person name="Rock D.L."/>
        </authorList>
    </citation>
    <scope>NUCLEOTIDE SEQUENCE [LARGE SCALE GENOMIC DNA]</scope>
</reference>
<feature type="chain" id="PRO_0000355063" description="Transcription factor TFIIS homolog">
    <location>
        <begin position="1"/>
        <end position="243"/>
    </location>
</feature>
<feature type="domain" description="TFIIS central" evidence="4">
    <location>
        <begin position="77"/>
        <end position="201"/>
    </location>
</feature>
<feature type="zinc finger region" description="TFIIS-type" evidence="3">
    <location>
        <begin position="202"/>
        <end position="242"/>
    </location>
</feature>
<feature type="binding site" evidence="3">
    <location>
        <position position="206"/>
    </location>
    <ligand>
        <name>Zn(2+)</name>
        <dbReference type="ChEBI" id="CHEBI:29105"/>
    </ligand>
</feature>
<feature type="binding site" evidence="3">
    <location>
        <position position="209"/>
    </location>
    <ligand>
        <name>Zn(2+)</name>
        <dbReference type="ChEBI" id="CHEBI:29105"/>
    </ligand>
</feature>
<feature type="binding site" evidence="3">
    <location>
        <position position="234"/>
    </location>
    <ligand>
        <name>Zn(2+)</name>
        <dbReference type="ChEBI" id="CHEBI:29105"/>
    </ligand>
</feature>
<feature type="binding site" evidence="3">
    <location>
        <position position="237"/>
    </location>
    <ligand>
        <name>Zn(2+)</name>
        <dbReference type="ChEBI" id="CHEBI:29105"/>
    </ligand>
</feature>
<organismHost>
    <name type="scientific">Ornithodoros</name>
    <name type="common">relapsing fever ticks</name>
    <dbReference type="NCBI Taxonomy" id="6937"/>
</organismHost>
<organismHost>
    <name type="scientific">Phacochoerus aethiopicus</name>
    <name type="common">Warthog</name>
    <dbReference type="NCBI Taxonomy" id="85517"/>
</organismHost>
<organismHost>
    <name type="scientific">Phacochoerus africanus</name>
    <name type="common">Warthog</name>
    <dbReference type="NCBI Taxonomy" id="41426"/>
</organismHost>
<organismHost>
    <name type="scientific">Potamochoerus larvatus</name>
    <name type="common">Bushpig</name>
    <dbReference type="NCBI Taxonomy" id="273792"/>
</organismHost>
<organismHost>
    <name type="scientific">Sus scrofa</name>
    <name type="common">Pig</name>
    <dbReference type="NCBI Taxonomy" id="9823"/>
</organismHost>
<accession>P0C8F8</accession>
<sequence length="243" mass="28539">MKMHIARDSIVFLLNKHLQNTILTNKIEQECFLQADTPKKYLQYIKPFLINCMTKNITTDLVMKDSKRLEPYIILEMRDIIQMMFFRTLQKHIFFKKHTDLCTEYAQKIEASCYHYTYQQQEKTFLEEYSTRCGTINHIINCEKKSHQQQDNDALNKLISGELKPEAIGSMTFAELCPSAALKEKTEITLRSQQKVAEKTSQLYKCPNCKQRMCTYREVQTRALDEPSTIFCTCKKCGHEFIG</sequence>
<gene>
    <name type="ordered locus">War-150</name>
</gene>
<name>TFIIS_ASFWA</name>
<organism>
    <name type="scientific">African swine fever virus (isolate Warthog/Namibia/Wart80/1980)</name>
    <name type="common">ASFV</name>
    <dbReference type="NCBI Taxonomy" id="561444"/>
    <lineage>
        <taxon>Viruses</taxon>
        <taxon>Varidnaviria</taxon>
        <taxon>Bamfordvirae</taxon>
        <taxon>Nucleocytoviricota</taxon>
        <taxon>Pokkesviricetes</taxon>
        <taxon>Asfuvirales</taxon>
        <taxon>Asfarviridae</taxon>
        <taxon>Asfivirus</taxon>
        <taxon>African swine fever virus</taxon>
    </lineage>
</organism>